<keyword id="KW-1003">Cell membrane</keyword>
<keyword id="KW-0472">Membrane</keyword>
<keyword id="KW-0653">Protein transport</keyword>
<keyword id="KW-1185">Reference proteome</keyword>
<keyword id="KW-0811">Translocation</keyword>
<keyword id="KW-0812">Transmembrane</keyword>
<keyword id="KW-1133">Transmembrane helix</keyword>
<keyword id="KW-0813">Transport</keyword>
<gene>
    <name evidence="1" type="primary">tatAc</name>
    <name type="synonym">ynzA</name>
    <name type="ordered locus">BSU17710</name>
</gene>
<comment type="function">
    <text evidence="1">Part of the twin-arginine translocation (Tat) system that transports large folded proteins containing a characteristic twin-arginine motif in their signal peptide across membranes. TatA could form the protein-conducting channel of the Tat system.</text>
</comment>
<comment type="subunit">
    <text evidence="1">Forms a complex with TatC.</text>
</comment>
<comment type="subcellular location">
    <subcellularLocation>
        <location evidence="1">Cell membrane</location>
        <topology evidence="1">Single-pass membrane protein</topology>
    </subcellularLocation>
</comment>
<comment type="similarity">
    <text evidence="1">Belongs to the TatA/E family.</text>
</comment>
<reference key="1">
    <citation type="journal article" date="1997" name="Nature">
        <title>The complete genome sequence of the Gram-positive bacterium Bacillus subtilis.</title>
        <authorList>
            <person name="Kunst F."/>
            <person name="Ogasawara N."/>
            <person name="Moszer I."/>
            <person name="Albertini A.M."/>
            <person name="Alloni G."/>
            <person name="Azevedo V."/>
            <person name="Bertero M.G."/>
            <person name="Bessieres P."/>
            <person name="Bolotin A."/>
            <person name="Borchert S."/>
            <person name="Borriss R."/>
            <person name="Boursier L."/>
            <person name="Brans A."/>
            <person name="Braun M."/>
            <person name="Brignell S.C."/>
            <person name="Bron S."/>
            <person name="Brouillet S."/>
            <person name="Bruschi C.V."/>
            <person name="Caldwell B."/>
            <person name="Capuano V."/>
            <person name="Carter N.M."/>
            <person name="Choi S.-K."/>
            <person name="Codani J.-J."/>
            <person name="Connerton I.F."/>
            <person name="Cummings N.J."/>
            <person name="Daniel R.A."/>
            <person name="Denizot F."/>
            <person name="Devine K.M."/>
            <person name="Duesterhoeft A."/>
            <person name="Ehrlich S.D."/>
            <person name="Emmerson P.T."/>
            <person name="Entian K.-D."/>
            <person name="Errington J."/>
            <person name="Fabret C."/>
            <person name="Ferrari E."/>
            <person name="Foulger D."/>
            <person name="Fritz C."/>
            <person name="Fujita M."/>
            <person name="Fujita Y."/>
            <person name="Fuma S."/>
            <person name="Galizzi A."/>
            <person name="Galleron N."/>
            <person name="Ghim S.-Y."/>
            <person name="Glaser P."/>
            <person name="Goffeau A."/>
            <person name="Golightly E.J."/>
            <person name="Grandi G."/>
            <person name="Guiseppi G."/>
            <person name="Guy B.J."/>
            <person name="Haga K."/>
            <person name="Haiech J."/>
            <person name="Harwood C.R."/>
            <person name="Henaut A."/>
            <person name="Hilbert H."/>
            <person name="Holsappel S."/>
            <person name="Hosono S."/>
            <person name="Hullo M.-F."/>
            <person name="Itaya M."/>
            <person name="Jones L.-M."/>
            <person name="Joris B."/>
            <person name="Karamata D."/>
            <person name="Kasahara Y."/>
            <person name="Klaerr-Blanchard M."/>
            <person name="Klein C."/>
            <person name="Kobayashi Y."/>
            <person name="Koetter P."/>
            <person name="Koningstein G."/>
            <person name="Krogh S."/>
            <person name="Kumano M."/>
            <person name="Kurita K."/>
            <person name="Lapidus A."/>
            <person name="Lardinois S."/>
            <person name="Lauber J."/>
            <person name="Lazarevic V."/>
            <person name="Lee S.-M."/>
            <person name="Levine A."/>
            <person name="Liu H."/>
            <person name="Masuda S."/>
            <person name="Mauel C."/>
            <person name="Medigue C."/>
            <person name="Medina N."/>
            <person name="Mellado R.P."/>
            <person name="Mizuno M."/>
            <person name="Moestl D."/>
            <person name="Nakai S."/>
            <person name="Noback M."/>
            <person name="Noone D."/>
            <person name="O'Reilly M."/>
            <person name="Ogawa K."/>
            <person name="Ogiwara A."/>
            <person name="Oudega B."/>
            <person name="Park S.-H."/>
            <person name="Parro V."/>
            <person name="Pohl T.M."/>
            <person name="Portetelle D."/>
            <person name="Porwollik S."/>
            <person name="Prescott A.M."/>
            <person name="Presecan E."/>
            <person name="Pujic P."/>
            <person name="Purnelle B."/>
            <person name="Rapoport G."/>
            <person name="Rey M."/>
            <person name="Reynolds S."/>
            <person name="Rieger M."/>
            <person name="Rivolta C."/>
            <person name="Rocha E."/>
            <person name="Roche B."/>
            <person name="Rose M."/>
            <person name="Sadaie Y."/>
            <person name="Sato T."/>
            <person name="Scanlan E."/>
            <person name="Schleich S."/>
            <person name="Schroeter R."/>
            <person name="Scoffone F."/>
            <person name="Sekiguchi J."/>
            <person name="Sekowska A."/>
            <person name="Seror S.J."/>
            <person name="Serror P."/>
            <person name="Shin B.-S."/>
            <person name="Soldo B."/>
            <person name="Sorokin A."/>
            <person name="Tacconi E."/>
            <person name="Takagi T."/>
            <person name="Takahashi H."/>
            <person name="Takemaru K."/>
            <person name="Takeuchi M."/>
            <person name="Tamakoshi A."/>
            <person name="Tanaka T."/>
            <person name="Terpstra P."/>
            <person name="Tognoni A."/>
            <person name="Tosato V."/>
            <person name="Uchiyama S."/>
            <person name="Vandenbol M."/>
            <person name="Vannier F."/>
            <person name="Vassarotti A."/>
            <person name="Viari A."/>
            <person name="Wambutt R."/>
            <person name="Wedler E."/>
            <person name="Wedler H."/>
            <person name="Weitzenegger T."/>
            <person name="Winters P."/>
            <person name="Wipat A."/>
            <person name="Yamamoto H."/>
            <person name="Yamane K."/>
            <person name="Yasumoto K."/>
            <person name="Yata K."/>
            <person name="Yoshida K."/>
            <person name="Yoshikawa H.-F."/>
            <person name="Zumstein E."/>
            <person name="Yoshikawa H."/>
            <person name="Danchin A."/>
        </authorList>
    </citation>
    <scope>NUCLEOTIDE SEQUENCE [LARGE SCALE GENOMIC DNA]</scope>
    <source>
        <strain>168</strain>
    </source>
</reference>
<reference key="2">
    <citation type="journal article" date="2000" name="J. Biol. Chem.">
        <title>TatC is a specificity determinant for protein secretion via the twin-arginine translocation pathway.</title>
        <authorList>
            <person name="Jongbloed J.D.H."/>
            <person name="Martin U."/>
            <person name="Antelmann H."/>
            <person name="Hecker M."/>
            <person name="Tjalsma H."/>
            <person name="Venema G."/>
            <person name="Bron S."/>
            <person name="van Dijl J.M."/>
            <person name="Mueller J."/>
        </authorList>
    </citation>
    <scope>IDENTIFICATION OF THE TAT GENES</scope>
</reference>
<accession>O31804</accession>
<protein>
    <recommendedName>
        <fullName evidence="1">Sec-independent protein translocase protein TatAc</fullName>
    </recommendedName>
</protein>
<organism>
    <name type="scientific">Bacillus subtilis (strain 168)</name>
    <dbReference type="NCBI Taxonomy" id="224308"/>
    <lineage>
        <taxon>Bacteria</taxon>
        <taxon>Bacillati</taxon>
        <taxon>Bacillota</taxon>
        <taxon>Bacilli</taxon>
        <taxon>Bacillales</taxon>
        <taxon>Bacillaceae</taxon>
        <taxon>Bacillus</taxon>
    </lineage>
</organism>
<feature type="chain" id="PRO_0000097982" description="Sec-independent protein translocase protein TatAc">
    <location>
        <begin position="1"/>
        <end position="62"/>
    </location>
</feature>
<feature type="transmembrane region" description="Helical" evidence="1">
    <location>
        <begin position="8"/>
        <end position="28"/>
    </location>
</feature>
<name>TATAC_BACSU</name>
<evidence type="ECO:0000255" key="1">
    <source>
        <dbReference type="HAMAP-Rule" id="MF_00236"/>
    </source>
</evidence>
<proteinExistence type="inferred from homology"/>
<sequence length="62" mass="6844">MELSFTKILVILFVGFLVFGPDKLPALGRAAGKALSEFKQATSGLTQDIRKNDSENKEDKQM</sequence>
<dbReference type="EMBL" id="AL009126">
    <property type="protein sequence ID" value="CAB13655.1"/>
    <property type="molecule type" value="Genomic_DNA"/>
</dbReference>
<dbReference type="PIR" id="C69894">
    <property type="entry name" value="C69894"/>
</dbReference>
<dbReference type="RefSeq" id="NP_389654.1">
    <property type="nucleotide sequence ID" value="NC_000964.3"/>
</dbReference>
<dbReference type="RefSeq" id="WP_003231634.1">
    <property type="nucleotide sequence ID" value="NZ_OZ025638.1"/>
</dbReference>
<dbReference type="SMR" id="O31804"/>
<dbReference type="FunCoup" id="O31804">
    <property type="interactions" value="34"/>
</dbReference>
<dbReference type="IntAct" id="O31804">
    <property type="interactions" value="31"/>
</dbReference>
<dbReference type="STRING" id="224308.BSU17710"/>
<dbReference type="PaxDb" id="224308-BSU17710"/>
<dbReference type="EnsemblBacteria" id="CAB13655">
    <property type="protein sequence ID" value="CAB13655"/>
    <property type="gene ID" value="BSU_17710"/>
</dbReference>
<dbReference type="GeneID" id="939527"/>
<dbReference type="KEGG" id="bsu:BSU17710"/>
<dbReference type="PATRIC" id="fig|224308.179.peg.1927"/>
<dbReference type="eggNOG" id="COG1826">
    <property type="taxonomic scope" value="Bacteria"/>
</dbReference>
<dbReference type="InParanoid" id="O31804"/>
<dbReference type="OrthoDB" id="9800908at2"/>
<dbReference type="PhylomeDB" id="O31804"/>
<dbReference type="BioCyc" id="BSUB:BSU17710-MONOMER"/>
<dbReference type="Proteomes" id="UP000001570">
    <property type="component" value="Chromosome"/>
</dbReference>
<dbReference type="GO" id="GO:0033281">
    <property type="term" value="C:TAT protein transport complex"/>
    <property type="evidence" value="ECO:0007669"/>
    <property type="project" value="UniProtKB-UniRule"/>
</dbReference>
<dbReference type="GO" id="GO:0008320">
    <property type="term" value="F:protein transmembrane transporter activity"/>
    <property type="evidence" value="ECO:0007669"/>
    <property type="project" value="UniProtKB-UniRule"/>
</dbReference>
<dbReference type="GO" id="GO:0043953">
    <property type="term" value="P:protein transport by the Tat complex"/>
    <property type="evidence" value="ECO:0007669"/>
    <property type="project" value="UniProtKB-UniRule"/>
</dbReference>
<dbReference type="Gene3D" id="1.20.5.3310">
    <property type="match status" value="1"/>
</dbReference>
<dbReference type="HAMAP" id="MF_00236">
    <property type="entry name" value="TatA_E"/>
    <property type="match status" value="1"/>
</dbReference>
<dbReference type="InterPro" id="IPR003369">
    <property type="entry name" value="TatA/B/E"/>
</dbReference>
<dbReference type="InterPro" id="IPR006312">
    <property type="entry name" value="TatA/E"/>
</dbReference>
<dbReference type="NCBIfam" id="NF011430">
    <property type="entry name" value="PRK14861.1"/>
    <property type="match status" value="1"/>
</dbReference>
<dbReference type="NCBIfam" id="TIGR01411">
    <property type="entry name" value="tatAE"/>
    <property type="match status" value="1"/>
</dbReference>
<dbReference type="PANTHER" id="PTHR42982">
    <property type="entry name" value="SEC-INDEPENDENT PROTEIN TRANSLOCASE PROTEIN TATA"/>
    <property type="match status" value="1"/>
</dbReference>
<dbReference type="PANTHER" id="PTHR42982:SF1">
    <property type="entry name" value="SEC-INDEPENDENT PROTEIN TRANSLOCASE PROTEIN TATA"/>
    <property type="match status" value="1"/>
</dbReference>
<dbReference type="Pfam" id="PF02416">
    <property type="entry name" value="TatA_B_E"/>
    <property type="match status" value="1"/>
</dbReference>